<evidence type="ECO:0000255" key="1">
    <source>
        <dbReference type="HAMAP-Rule" id="MF_00402"/>
    </source>
</evidence>
<evidence type="ECO:0000305" key="2"/>
<dbReference type="EMBL" id="CP000050">
    <property type="protein sequence ID" value="AAY50088.1"/>
    <property type="molecule type" value="Genomic_DNA"/>
</dbReference>
<dbReference type="RefSeq" id="WP_011036399.1">
    <property type="nucleotide sequence ID" value="NZ_CP155948.1"/>
</dbReference>
<dbReference type="SMR" id="Q4US85"/>
<dbReference type="GeneID" id="97210836"/>
<dbReference type="KEGG" id="xcb:XC_3040"/>
<dbReference type="HOGENOM" id="CLU_103507_2_1_6"/>
<dbReference type="Proteomes" id="UP000000420">
    <property type="component" value="Chromosome"/>
</dbReference>
<dbReference type="GO" id="GO:0022625">
    <property type="term" value="C:cytosolic large ribosomal subunit"/>
    <property type="evidence" value="ECO:0007669"/>
    <property type="project" value="TreeGrafter"/>
</dbReference>
<dbReference type="GO" id="GO:0003735">
    <property type="term" value="F:structural constituent of ribosome"/>
    <property type="evidence" value="ECO:0007669"/>
    <property type="project" value="InterPro"/>
</dbReference>
<dbReference type="GO" id="GO:0006412">
    <property type="term" value="P:translation"/>
    <property type="evidence" value="ECO:0007669"/>
    <property type="project" value="UniProtKB-UniRule"/>
</dbReference>
<dbReference type="FunFam" id="2.30.30.790:FF:000001">
    <property type="entry name" value="50S ribosomal protein L19"/>
    <property type="match status" value="1"/>
</dbReference>
<dbReference type="Gene3D" id="2.30.30.790">
    <property type="match status" value="1"/>
</dbReference>
<dbReference type="HAMAP" id="MF_00402">
    <property type="entry name" value="Ribosomal_bL19"/>
    <property type="match status" value="1"/>
</dbReference>
<dbReference type="InterPro" id="IPR001857">
    <property type="entry name" value="Ribosomal_bL19"/>
</dbReference>
<dbReference type="InterPro" id="IPR018257">
    <property type="entry name" value="Ribosomal_bL19_CS"/>
</dbReference>
<dbReference type="InterPro" id="IPR038657">
    <property type="entry name" value="Ribosomal_bL19_sf"/>
</dbReference>
<dbReference type="InterPro" id="IPR008991">
    <property type="entry name" value="Translation_prot_SH3-like_sf"/>
</dbReference>
<dbReference type="NCBIfam" id="TIGR01024">
    <property type="entry name" value="rplS_bact"/>
    <property type="match status" value="1"/>
</dbReference>
<dbReference type="PANTHER" id="PTHR15680:SF9">
    <property type="entry name" value="LARGE RIBOSOMAL SUBUNIT PROTEIN BL19M"/>
    <property type="match status" value="1"/>
</dbReference>
<dbReference type="PANTHER" id="PTHR15680">
    <property type="entry name" value="RIBOSOMAL PROTEIN L19"/>
    <property type="match status" value="1"/>
</dbReference>
<dbReference type="Pfam" id="PF01245">
    <property type="entry name" value="Ribosomal_L19"/>
    <property type="match status" value="1"/>
</dbReference>
<dbReference type="PIRSF" id="PIRSF002191">
    <property type="entry name" value="Ribosomal_L19"/>
    <property type="match status" value="1"/>
</dbReference>
<dbReference type="PRINTS" id="PR00061">
    <property type="entry name" value="RIBOSOMALL19"/>
</dbReference>
<dbReference type="SUPFAM" id="SSF50104">
    <property type="entry name" value="Translation proteins SH3-like domain"/>
    <property type="match status" value="1"/>
</dbReference>
<dbReference type="PROSITE" id="PS01015">
    <property type="entry name" value="RIBOSOMAL_L19"/>
    <property type="match status" value="1"/>
</dbReference>
<organism>
    <name type="scientific">Xanthomonas campestris pv. campestris (strain 8004)</name>
    <dbReference type="NCBI Taxonomy" id="314565"/>
    <lineage>
        <taxon>Bacteria</taxon>
        <taxon>Pseudomonadati</taxon>
        <taxon>Pseudomonadota</taxon>
        <taxon>Gammaproteobacteria</taxon>
        <taxon>Lysobacterales</taxon>
        <taxon>Lysobacteraceae</taxon>
        <taxon>Xanthomonas</taxon>
    </lineage>
</organism>
<gene>
    <name evidence="1" type="primary">rplS</name>
    <name type="ordered locus">XC_3040</name>
</gene>
<proteinExistence type="inferred from homology"/>
<name>RL19_XANC8</name>
<feature type="chain" id="PRO_0000226883" description="Large ribosomal subunit protein bL19">
    <location>
        <begin position="1"/>
        <end position="135"/>
    </location>
</feature>
<sequence length="135" mass="14738">MSKLNKTILADFEAAQIQRQLPEFNQGDTVVVNVKVKEGNRERVQAYEGVVIGTKNAGLNSAFTVRKISHGFGVERVFQTHSAIIDSVEVKRRGKVRAGKLYYLRGLEGKAARIKEDLAAAAQAKAARQAAAKAE</sequence>
<comment type="function">
    <text evidence="1">This protein is located at the 30S-50S ribosomal subunit interface and may play a role in the structure and function of the aminoacyl-tRNA binding site.</text>
</comment>
<comment type="similarity">
    <text evidence="1">Belongs to the bacterial ribosomal protein bL19 family.</text>
</comment>
<accession>Q4US85</accession>
<reference key="1">
    <citation type="journal article" date="2005" name="Genome Res.">
        <title>Comparative and functional genomic analyses of the pathogenicity of phytopathogen Xanthomonas campestris pv. campestris.</title>
        <authorList>
            <person name="Qian W."/>
            <person name="Jia Y."/>
            <person name="Ren S.-X."/>
            <person name="He Y.-Q."/>
            <person name="Feng J.-X."/>
            <person name="Lu L.-F."/>
            <person name="Sun Q."/>
            <person name="Ying G."/>
            <person name="Tang D.-J."/>
            <person name="Tang H."/>
            <person name="Wu W."/>
            <person name="Hao P."/>
            <person name="Wang L."/>
            <person name="Jiang B.-L."/>
            <person name="Zeng S."/>
            <person name="Gu W.-Y."/>
            <person name="Lu G."/>
            <person name="Rong L."/>
            <person name="Tian Y."/>
            <person name="Yao Z."/>
            <person name="Fu G."/>
            <person name="Chen B."/>
            <person name="Fang R."/>
            <person name="Qiang B."/>
            <person name="Chen Z."/>
            <person name="Zhao G.-P."/>
            <person name="Tang J.-L."/>
            <person name="He C."/>
        </authorList>
    </citation>
    <scope>NUCLEOTIDE SEQUENCE [LARGE SCALE GENOMIC DNA]</scope>
    <source>
        <strain>8004</strain>
    </source>
</reference>
<keyword id="KW-0687">Ribonucleoprotein</keyword>
<keyword id="KW-0689">Ribosomal protein</keyword>
<protein>
    <recommendedName>
        <fullName evidence="1">Large ribosomal subunit protein bL19</fullName>
    </recommendedName>
    <alternativeName>
        <fullName evidence="2">50S ribosomal protein L19</fullName>
    </alternativeName>
</protein>